<evidence type="ECO:0000255" key="1">
    <source>
        <dbReference type="HAMAP-Rule" id="MF_00038"/>
    </source>
</evidence>
<reference key="1">
    <citation type="journal article" date="2001" name="Proc. Natl. Acad. Sci. U.S.A.">
        <title>Complete genome sequence of an M1 strain of Streptococcus pyogenes.</title>
        <authorList>
            <person name="Ferretti J.J."/>
            <person name="McShan W.M."/>
            <person name="Ajdic D.J."/>
            <person name="Savic D.J."/>
            <person name="Savic G."/>
            <person name="Lyon K."/>
            <person name="Primeaux C."/>
            <person name="Sezate S."/>
            <person name="Suvorov A.N."/>
            <person name="Kenton S."/>
            <person name="Lai H.S."/>
            <person name="Lin S.P."/>
            <person name="Qian Y."/>
            <person name="Jia H.G."/>
            <person name="Najar F.Z."/>
            <person name="Ren Q."/>
            <person name="Zhu H."/>
            <person name="Song L."/>
            <person name="White J."/>
            <person name="Yuan X."/>
            <person name="Clifton S.W."/>
            <person name="Roe B.A."/>
            <person name="McLaughlin R.E."/>
        </authorList>
    </citation>
    <scope>NUCLEOTIDE SEQUENCE [LARGE SCALE GENOMIC DNA]</scope>
    <source>
        <strain>ATCC 700294 / SF370 / Serotype M1</strain>
    </source>
</reference>
<reference key="2">
    <citation type="journal article" date="2005" name="J. Infect. Dis.">
        <title>Evolutionary origin and emergence of a highly successful clone of serotype M1 group A Streptococcus involved multiple horizontal gene transfer events.</title>
        <authorList>
            <person name="Sumby P."/>
            <person name="Porcella S.F."/>
            <person name="Madrigal A.G."/>
            <person name="Barbian K.D."/>
            <person name="Virtaneva K."/>
            <person name="Ricklefs S.M."/>
            <person name="Sturdevant D.E."/>
            <person name="Graham M.R."/>
            <person name="Vuopio-Varkila J."/>
            <person name="Hoe N.P."/>
            <person name="Musser J.M."/>
        </authorList>
    </citation>
    <scope>NUCLEOTIDE SEQUENCE [LARGE SCALE GENOMIC DNA]</scope>
    <source>
        <strain>ATCC BAA-947 / MGAS5005 / Serotype M1</strain>
    </source>
</reference>
<gene>
    <name evidence="1" type="primary">mraY</name>
    <name type="ordered locus">SPy_1662</name>
    <name type="ordered locus">M5005_Spy1365</name>
</gene>
<comment type="function">
    <text evidence="1">Catalyzes the initial step of the lipid cycle reactions in the biosynthesis of the cell wall peptidoglycan: transfers peptidoglycan precursor phospho-MurNAc-pentapeptide from UDP-MurNAc-pentapeptide onto the lipid carrier undecaprenyl phosphate, yielding undecaprenyl-pyrophosphoryl-MurNAc-pentapeptide, known as lipid I.</text>
</comment>
<comment type="catalytic activity">
    <reaction evidence="1">
        <text>UDP-N-acetyl-alpha-D-muramoyl-L-alanyl-gamma-D-glutamyl-L-lysyl-D-alanyl-D-alanine + di-trans,octa-cis-undecaprenyl phosphate = Mur2Ac(oyl-L-Ala-gamma-D-Glu-L-Lys-D-Ala-D-Ala)-di-trans,octa-cis-undecaprenyl diphosphate + UMP</text>
        <dbReference type="Rhea" id="RHEA:21920"/>
        <dbReference type="ChEBI" id="CHEBI:57865"/>
        <dbReference type="ChEBI" id="CHEBI:60032"/>
        <dbReference type="ChEBI" id="CHEBI:60392"/>
        <dbReference type="ChEBI" id="CHEBI:70758"/>
        <dbReference type="EC" id="2.7.8.13"/>
    </reaction>
</comment>
<comment type="cofactor">
    <cofactor evidence="1">
        <name>Mg(2+)</name>
        <dbReference type="ChEBI" id="CHEBI:18420"/>
    </cofactor>
</comment>
<comment type="pathway">
    <text evidence="1">Cell wall biogenesis; peptidoglycan biosynthesis.</text>
</comment>
<comment type="subcellular location">
    <subcellularLocation>
        <location evidence="1">Cell membrane</location>
        <topology evidence="1">Multi-pass membrane protein</topology>
    </subcellularLocation>
</comment>
<comment type="similarity">
    <text evidence="1">Belongs to the glycosyltransferase 4 family. MraY subfamily.</text>
</comment>
<accession>Q99YK2</accession>
<accession>Q48XE2</accession>
<protein>
    <recommendedName>
        <fullName evidence="1">Phospho-N-acetylmuramoyl-pentapeptide-transferase</fullName>
        <ecNumber evidence="1">2.7.8.13</ecNumber>
    </recommendedName>
    <alternativeName>
        <fullName evidence="1">UDP-MurNAc-pentapeptide phosphotransferase</fullName>
    </alternativeName>
</protein>
<sequence>MFLTLIAAIISFMVSAFTMPYFIKFYQLKKIGGQQMHEDVKQHLAKAGTPTMGGTVFLLVATAVSLLVSLFSIKNTQSLALISGILSIVVIYGIIGFLDDFLKIFKQINEGLTAKQKLALQLVGGLMFYFLHVSPSGISSINVFGYQLPLGIFYLFFVLFWVVGFSNAVNLTDGIDGLASISVVISLVTYGVIAYVQSQFDVLLLIGAMIGALLGFFCFNHKPAKVFMGDVGSLALGAMLAAISIALRQEWTLLIIGIVYVLETSSVMLQVSYFKYTKKKYGEGRRIFRMTPFHHHLELGGLSGKGKKWSEWQVDAFLWGVGSLASLLVLAILYVF</sequence>
<feature type="chain" id="PRO_0000108906" description="Phospho-N-acetylmuramoyl-pentapeptide-transferase">
    <location>
        <begin position="1"/>
        <end position="336"/>
    </location>
</feature>
<feature type="transmembrane region" description="Helical" evidence="1">
    <location>
        <begin position="3"/>
        <end position="23"/>
    </location>
</feature>
<feature type="transmembrane region" description="Helical" evidence="1">
    <location>
        <begin position="53"/>
        <end position="73"/>
    </location>
</feature>
<feature type="transmembrane region" description="Helical" evidence="1">
    <location>
        <begin position="78"/>
        <end position="98"/>
    </location>
</feature>
<feature type="transmembrane region" description="Helical" evidence="1">
    <location>
        <begin position="118"/>
        <end position="138"/>
    </location>
</feature>
<feature type="transmembrane region" description="Helical" evidence="1">
    <location>
        <begin position="143"/>
        <end position="163"/>
    </location>
</feature>
<feature type="transmembrane region" description="Helical" evidence="1">
    <location>
        <begin position="174"/>
        <end position="194"/>
    </location>
</feature>
<feature type="transmembrane region" description="Helical" evidence="1">
    <location>
        <begin position="200"/>
        <end position="220"/>
    </location>
</feature>
<feature type="transmembrane region" description="Helical" evidence="1">
    <location>
        <begin position="226"/>
        <end position="246"/>
    </location>
</feature>
<feature type="transmembrane region" description="Helical" evidence="1">
    <location>
        <begin position="251"/>
        <end position="271"/>
    </location>
</feature>
<feature type="transmembrane region" description="Helical" evidence="1">
    <location>
        <begin position="316"/>
        <end position="336"/>
    </location>
</feature>
<dbReference type="EC" id="2.7.8.13" evidence="1"/>
<dbReference type="EMBL" id="AE004092">
    <property type="protein sequence ID" value="AAK34425.1"/>
    <property type="molecule type" value="Genomic_DNA"/>
</dbReference>
<dbReference type="EMBL" id="CP000017">
    <property type="protein sequence ID" value="AAZ51983.1"/>
    <property type="molecule type" value="Genomic_DNA"/>
</dbReference>
<dbReference type="RefSeq" id="NP_269704.1">
    <property type="nucleotide sequence ID" value="NC_002737.2"/>
</dbReference>
<dbReference type="SMR" id="Q99YK2"/>
<dbReference type="PaxDb" id="1314-HKU360_01416"/>
<dbReference type="DNASU" id="901912"/>
<dbReference type="KEGG" id="spy:SPy_1662"/>
<dbReference type="KEGG" id="spz:M5005_Spy1365"/>
<dbReference type="PATRIC" id="fig|160490.10.peg.1448"/>
<dbReference type="HOGENOM" id="CLU_023982_0_1_9"/>
<dbReference type="OMA" id="DTPTMGG"/>
<dbReference type="UniPathway" id="UPA00219"/>
<dbReference type="Proteomes" id="UP000000750">
    <property type="component" value="Chromosome"/>
</dbReference>
<dbReference type="GO" id="GO:0005886">
    <property type="term" value="C:plasma membrane"/>
    <property type="evidence" value="ECO:0007669"/>
    <property type="project" value="UniProtKB-SubCell"/>
</dbReference>
<dbReference type="GO" id="GO:0046872">
    <property type="term" value="F:metal ion binding"/>
    <property type="evidence" value="ECO:0007669"/>
    <property type="project" value="UniProtKB-KW"/>
</dbReference>
<dbReference type="GO" id="GO:0008963">
    <property type="term" value="F:phospho-N-acetylmuramoyl-pentapeptide-transferase activity"/>
    <property type="evidence" value="ECO:0007669"/>
    <property type="project" value="UniProtKB-UniRule"/>
</dbReference>
<dbReference type="GO" id="GO:0051301">
    <property type="term" value="P:cell division"/>
    <property type="evidence" value="ECO:0007669"/>
    <property type="project" value="UniProtKB-KW"/>
</dbReference>
<dbReference type="GO" id="GO:0071555">
    <property type="term" value="P:cell wall organization"/>
    <property type="evidence" value="ECO:0007669"/>
    <property type="project" value="UniProtKB-KW"/>
</dbReference>
<dbReference type="GO" id="GO:0009252">
    <property type="term" value="P:peptidoglycan biosynthetic process"/>
    <property type="evidence" value="ECO:0007669"/>
    <property type="project" value="UniProtKB-UniRule"/>
</dbReference>
<dbReference type="GO" id="GO:0008360">
    <property type="term" value="P:regulation of cell shape"/>
    <property type="evidence" value="ECO:0007669"/>
    <property type="project" value="UniProtKB-KW"/>
</dbReference>
<dbReference type="CDD" id="cd06852">
    <property type="entry name" value="GT_MraY"/>
    <property type="match status" value="1"/>
</dbReference>
<dbReference type="HAMAP" id="MF_00038">
    <property type="entry name" value="MraY"/>
    <property type="match status" value="1"/>
</dbReference>
<dbReference type="InterPro" id="IPR000715">
    <property type="entry name" value="Glycosyl_transferase_4"/>
</dbReference>
<dbReference type="InterPro" id="IPR003524">
    <property type="entry name" value="PNAcMuramoyl-5peptid_Trfase"/>
</dbReference>
<dbReference type="InterPro" id="IPR018480">
    <property type="entry name" value="PNAcMuramoyl-5peptid_Trfase_CS"/>
</dbReference>
<dbReference type="NCBIfam" id="TIGR00445">
    <property type="entry name" value="mraY"/>
    <property type="match status" value="1"/>
</dbReference>
<dbReference type="PANTHER" id="PTHR22926">
    <property type="entry name" value="PHOSPHO-N-ACETYLMURAMOYL-PENTAPEPTIDE-TRANSFERASE"/>
    <property type="match status" value="1"/>
</dbReference>
<dbReference type="PANTHER" id="PTHR22926:SF5">
    <property type="entry name" value="PHOSPHO-N-ACETYLMURAMOYL-PENTAPEPTIDE-TRANSFERASE HOMOLOG"/>
    <property type="match status" value="1"/>
</dbReference>
<dbReference type="Pfam" id="PF00953">
    <property type="entry name" value="Glycos_transf_4"/>
    <property type="match status" value="1"/>
</dbReference>
<dbReference type="Pfam" id="PF10555">
    <property type="entry name" value="MraY_sig1"/>
    <property type="match status" value="1"/>
</dbReference>
<dbReference type="PROSITE" id="PS01348">
    <property type="entry name" value="MRAY_2"/>
    <property type="match status" value="1"/>
</dbReference>
<proteinExistence type="inferred from homology"/>
<name>MRAY_STRP1</name>
<keyword id="KW-0131">Cell cycle</keyword>
<keyword id="KW-0132">Cell division</keyword>
<keyword id="KW-1003">Cell membrane</keyword>
<keyword id="KW-0133">Cell shape</keyword>
<keyword id="KW-0961">Cell wall biogenesis/degradation</keyword>
<keyword id="KW-0460">Magnesium</keyword>
<keyword id="KW-0472">Membrane</keyword>
<keyword id="KW-0479">Metal-binding</keyword>
<keyword id="KW-0573">Peptidoglycan synthesis</keyword>
<keyword id="KW-1185">Reference proteome</keyword>
<keyword id="KW-0808">Transferase</keyword>
<keyword id="KW-0812">Transmembrane</keyword>
<keyword id="KW-1133">Transmembrane helix</keyword>
<organism>
    <name type="scientific">Streptococcus pyogenes serotype M1</name>
    <dbReference type="NCBI Taxonomy" id="301447"/>
    <lineage>
        <taxon>Bacteria</taxon>
        <taxon>Bacillati</taxon>
        <taxon>Bacillota</taxon>
        <taxon>Bacilli</taxon>
        <taxon>Lactobacillales</taxon>
        <taxon>Streptococcaceae</taxon>
        <taxon>Streptococcus</taxon>
    </lineage>
</organism>